<comment type="function">
    <text>This protein is one of many from the eggshell of the silk moth.</text>
</comment>
<comment type="similarity">
    <text evidence="1">Belongs to the chorion protein family.</text>
</comment>
<sequence length="119" mass="11092">VQNVFGVCRGGLGLKGLAAPACGCGGLGYEGLGYGALGYDGLGYGAGWAGPACGSYGGEGIGNVAVAGELPVAGTTAVAGQVPIIGAVDFCGRANAGGCVSIGGRCTGCGCGCGSSYPY</sequence>
<keyword id="KW-0677">Repeat</keyword>
<keyword id="KW-0732">Signal</keyword>
<organism>
    <name type="scientific">Antheraea polyphemus</name>
    <name type="common">Polyphemus moth</name>
    <dbReference type="NCBI Taxonomy" id="7120"/>
    <lineage>
        <taxon>Eukaryota</taxon>
        <taxon>Metazoa</taxon>
        <taxon>Ecdysozoa</taxon>
        <taxon>Arthropoda</taxon>
        <taxon>Hexapoda</taxon>
        <taxon>Insecta</taxon>
        <taxon>Pterygota</taxon>
        <taxon>Neoptera</taxon>
        <taxon>Endopterygota</taxon>
        <taxon>Lepidoptera</taxon>
        <taxon>Glossata</taxon>
        <taxon>Ditrysia</taxon>
        <taxon>Bombycoidea</taxon>
        <taxon>Saturniidae</taxon>
        <taxon>Saturniinae</taxon>
        <taxon>Saturniini</taxon>
        <taxon>Antheraea</taxon>
    </lineage>
</organism>
<accession>P02846</accession>
<evidence type="ECO:0000305" key="1"/>
<protein>
    <recommendedName>
        <fullName>Chorion class A protein PC292</fullName>
    </recommendedName>
</protein>
<feature type="signal peptide">
    <location>
        <begin position="1" status="less than"/>
        <end position="6"/>
    </location>
</feature>
<feature type="chain" id="PRO_0000005373" description="Chorion class A protein PC292">
    <location>
        <begin position="7"/>
        <end position="119"/>
    </location>
</feature>
<feature type="repeat">
    <location>
        <begin position="28"/>
        <end position="32"/>
    </location>
</feature>
<feature type="repeat">
    <location>
        <begin position="33"/>
        <end position="37"/>
    </location>
</feature>
<feature type="repeat">
    <location>
        <begin position="38"/>
        <end position="42"/>
    </location>
</feature>
<feature type="repeat">
    <location>
        <begin position="43"/>
        <end position="47"/>
    </location>
</feature>
<feature type="region of interest" description="Left arm">
    <location>
        <begin position="7"/>
        <end position="53"/>
    </location>
</feature>
<feature type="region of interest" description="Central domain">
    <location>
        <begin position="54"/>
        <end position="102"/>
    </location>
</feature>
<feature type="region of interest" description="Right arm">
    <location>
        <begin position="103"/>
        <end position="119"/>
    </location>
</feature>
<feature type="sequence variant">
    <original>P</original>
    <variation>L</variation>
    <location>
        <position position="118"/>
    </location>
</feature>
<feature type="non-terminal residue">
    <location>
        <position position="1"/>
    </location>
</feature>
<name>CHA1_ANTPO</name>
<proteinExistence type="evidence at transcript level"/>
<dbReference type="EMBL" id="J01159">
    <property type="protein sequence ID" value="AAA27780.1"/>
    <property type="molecule type" value="mRNA"/>
</dbReference>
<dbReference type="EMBL" id="V00078">
    <property type="protein sequence ID" value="CAA23420.1"/>
    <property type="molecule type" value="mRNA"/>
</dbReference>
<dbReference type="PIR" id="A03336">
    <property type="entry name" value="JAAO92"/>
</dbReference>
<reference key="1">
    <citation type="journal article" date="1980" name="Nucleic Acids Res.">
        <title>Selection and sequence analysis of a cDNA clone encoding a known chorion protein of the A family.</title>
        <authorList>
            <person name="Tsitilou S.G."/>
            <person name="Regier J.C."/>
            <person name="Kafatos F.C."/>
        </authorList>
    </citation>
    <scope>NUCLEOTIDE SEQUENCE [MRNA]</scope>
</reference>